<reference key="1">
    <citation type="journal article" date="2004" name="Nat. Genet.">
        <title>Complete sequencing and characterization of 21,243 full-length human cDNAs.</title>
        <authorList>
            <person name="Ota T."/>
            <person name="Suzuki Y."/>
            <person name="Nishikawa T."/>
            <person name="Otsuki T."/>
            <person name="Sugiyama T."/>
            <person name="Irie R."/>
            <person name="Wakamatsu A."/>
            <person name="Hayashi K."/>
            <person name="Sato H."/>
            <person name="Nagai K."/>
            <person name="Kimura K."/>
            <person name="Makita H."/>
            <person name="Sekine M."/>
            <person name="Obayashi M."/>
            <person name="Nishi T."/>
            <person name="Shibahara T."/>
            <person name="Tanaka T."/>
            <person name="Ishii S."/>
            <person name="Yamamoto J."/>
            <person name="Saito K."/>
            <person name="Kawai Y."/>
            <person name="Isono Y."/>
            <person name="Nakamura Y."/>
            <person name="Nagahari K."/>
            <person name="Murakami K."/>
            <person name="Yasuda T."/>
            <person name="Iwayanagi T."/>
            <person name="Wagatsuma M."/>
            <person name="Shiratori A."/>
            <person name="Sudo H."/>
            <person name="Hosoiri T."/>
            <person name="Kaku Y."/>
            <person name="Kodaira H."/>
            <person name="Kondo H."/>
            <person name="Sugawara M."/>
            <person name="Takahashi M."/>
            <person name="Kanda K."/>
            <person name="Yokoi T."/>
            <person name="Furuya T."/>
            <person name="Kikkawa E."/>
            <person name="Omura Y."/>
            <person name="Abe K."/>
            <person name="Kamihara K."/>
            <person name="Katsuta N."/>
            <person name="Sato K."/>
            <person name="Tanikawa M."/>
            <person name="Yamazaki M."/>
            <person name="Ninomiya K."/>
            <person name="Ishibashi T."/>
            <person name="Yamashita H."/>
            <person name="Murakawa K."/>
            <person name="Fujimori K."/>
            <person name="Tanai H."/>
            <person name="Kimata M."/>
            <person name="Watanabe M."/>
            <person name="Hiraoka S."/>
            <person name="Chiba Y."/>
            <person name="Ishida S."/>
            <person name="Ono Y."/>
            <person name="Takiguchi S."/>
            <person name="Watanabe S."/>
            <person name="Yosida M."/>
            <person name="Hotuta T."/>
            <person name="Kusano J."/>
            <person name="Kanehori K."/>
            <person name="Takahashi-Fujii A."/>
            <person name="Hara H."/>
            <person name="Tanase T.-O."/>
            <person name="Nomura Y."/>
            <person name="Togiya S."/>
            <person name="Komai F."/>
            <person name="Hara R."/>
            <person name="Takeuchi K."/>
            <person name="Arita M."/>
            <person name="Imose N."/>
            <person name="Musashino K."/>
            <person name="Yuuki H."/>
            <person name="Oshima A."/>
            <person name="Sasaki N."/>
            <person name="Aotsuka S."/>
            <person name="Yoshikawa Y."/>
            <person name="Matsunawa H."/>
            <person name="Ichihara T."/>
            <person name="Shiohata N."/>
            <person name="Sano S."/>
            <person name="Moriya S."/>
            <person name="Momiyama H."/>
            <person name="Satoh N."/>
            <person name="Takami S."/>
            <person name="Terashima Y."/>
            <person name="Suzuki O."/>
            <person name="Nakagawa S."/>
            <person name="Senoh A."/>
            <person name="Mizoguchi H."/>
            <person name="Goto Y."/>
            <person name="Shimizu F."/>
            <person name="Wakebe H."/>
            <person name="Hishigaki H."/>
            <person name="Watanabe T."/>
            <person name="Sugiyama A."/>
            <person name="Takemoto M."/>
            <person name="Kawakami B."/>
            <person name="Yamazaki M."/>
            <person name="Watanabe K."/>
            <person name="Kumagai A."/>
            <person name="Itakura S."/>
            <person name="Fukuzumi Y."/>
            <person name="Fujimori Y."/>
            <person name="Komiyama M."/>
            <person name="Tashiro H."/>
            <person name="Tanigami A."/>
            <person name="Fujiwara T."/>
            <person name="Ono T."/>
            <person name="Yamada K."/>
            <person name="Fujii Y."/>
            <person name="Ozaki K."/>
            <person name="Hirao M."/>
            <person name="Ohmori Y."/>
            <person name="Kawabata A."/>
            <person name="Hikiji T."/>
            <person name="Kobatake N."/>
            <person name="Inagaki H."/>
            <person name="Ikema Y."/>
            <person name="Okamoto S."/>
            <person name="Okitani R."/>
            <person name="Kawakami T."/>
            <person name="Noguchi S."/>
            <person name="Itoh T."/>
            <person name="Shigeta K."/>
            <person name="Senba T."/>
            <person name="Matsumura K."/>
            <person name="Nakajima Y."/>
            <person name="Mizuno T."/>
            <person name="Morinaga M."/>
            <person name="Sasaki M."/>
            <person name="Togashi T."/>
            <person name="Oyama M."/>
            <person name="Hata H."/>
            <person name="Watanabe M."/>
            <person name="Komatsu T."/>
            <person name="Mizushima-Sugano J."/>
            <person name="Satoh T."/>
            <person name="Shirai Y."/>
            <person name="Takahashi Y."/>
            <person name="Nakagawa K."/>
            <person name="Okumura K."/>
            <person name="Nagase T."/>
            <person name="Nomura N."/>
            <person name="Kikuchi H."/>
            <person name="Masuho Y."/>
            <person name="Yamashita R."/>
            <person name="Nakai K."/>
            <person name="Yada T."/>
            <person name="Nakamura Y."/>
            <person name="Ohara O."/>
            <person name="Isogai T."/>
            <person name="Sugano S."/>
        </authorList>
    </citation>
    <scope>NUCLEOTIDE SEQUENCE [LARGE SCALE MRNA] (ISOFORMS 1 AND 2)</scope>
    <source>
        <tissue>Testis</tissue>
    </source>
</reference>
<reference key="2">
    <citation type="journal article" date="2004" name="Nature">
        <title>The sequence and analysis of duplication-rich human chromosome 16.</title>
        <authorList>
            <person name="Martin J."/>
            <person name="Han C."/>
            <person name="Gordon L.A."/>
            <person name="Terry A."/>
            <person name="Prabhakar S."/>
            <person name="She X."/>
            <person name="Xie G."/>
            <person name="Hellsten U."/>
            <person name="Chan Y.M."/>
            <person name="Altherr M."/>
            <person name="Couronne O."/>
            <person name="Aerts A."/>
            <person name="Bajorek E."/>
            <person name="Black S."/>
            <person name="Blumer H."/>
            <person name="Branscomb E."/>
            <person name="Brown N.C."/>
            <person name="Bruno W.J."/>
            <person name="Buckingham J.M."/>
            <person name="Callen D.F."/>
            <person name="Campbell C.S."/>
            <person name="Campbell M.L."/>
            <person name="Campbell E.W."/>
            <person name="Caoile C."/>
            <person name="Challacombe J.F."/>
            <person name="Chasteen L.A."/>
            <person name="Chertkov O."/>
            <person name="Chi H.C."/>
            <person name="Christensen M."/>
            <person name="Clark L.M."/>
            <person name="Cohn J.D."/>
            <person name="Denys M."/>
            <person name="Detter J.C."/>
            <person name="Dickson M."/>
            <person name="Dimitrijevic-Bussod M."/>
            <person name="Escobar J."/>
            <person name="Fawcett J.J."/>
            <person name="Flowers D."/>
            <person name="Fotopulos D."/>
            <person name="Glavina T."/>
            <person name="Gomez M."/>
            <person name="Gonzales E."/>
            <person name="Goodstein D."/>
            <person name="Goodwin L.A."/>
            <person name="Grady D.L."/>
            <person name="Grigoriev I."/>
            <person name="Groza M."/>
            <person name="Hammon N."/>
            <person name="Hawkins T."/>
            <person name="Haydu L."/>
            <person name="Hildebrand C.E."/>
            <person name="Huang W."/>
            <person name="Israni S."/>
            <person name="Jett J."/>
            <person name="Jewett P.B."/>
            <person name="Kadner K."/>
            <person name="Kimball H."/>
            <person name="Kobayashi A."/>
            <person name="Krawczyk M.-C."/>
            <person name="Leyba T."/>
            <person name="Longmire J.L."/>
            <person name="Lopez F."/>
            <person name="Lou Y."/>
            <person name="Lowry S."/>
            <person name="Ludeman T."/>
            <person name="Manohar C.F."/>
            <person name="Mark G.A."/>
            <person name="McMurray K.L."/>
            <person name="Meincke L.J."/>
            <person name="Morgan J."/>
            <person name="Moyzis R.K."/>
            <person name="Mundt M.O."/>
            <person name="Munk A.C."/>
            <person name="Nandkeshwar R.D."/>
            <person name="Pitluck S."/>
            <person name="Pollard M."/>
            <person name="Predki P."/>
            <person name="Parson-Quintana B."/>
            <person name="Ramirez L."/>
            <person name="Rash S."/>
            <person name="Retterer J."/>
            <person name="Ricke D.O."/>
            <person name="Robinson D.L."/>
            <person name="Rodriguez A."/>
            <person name="Salamov A."/>
            <person name="Saunders E.H."/>
            <person name="Scott D."/>
            <person name="Shough T."/>
            <person name="Stallings R.L."/>
            <person name="Stalvey M."/>
            <person name="Sutherland R.D."/>
            <person name="Tapia R."/>
            <person name="Tesmer J.G."/>
            <person name="Thayer N."/>
            <person name="Thompson L.S."/>
            <person name="Tice H."/>
            <person name="Torney D.C."/>
            <person name="Tran-Gyamfi M."/>
            <person name="Tsai M."/>
            <person name="Ulanovsky L.E."/>
            <person name="Ustaszewska A."/>
            <person name="Vo N."/>
            <person name="White P.S."/>
            <person name="Williams A.L."/>
            <person name="Wills P.L."/>
            <person name="Wu J.-R."/>
            <person name="Wu K."/>
            <person name="Yang J."/>
            <person name="DeJong P."/>
            <person name="Bruce D."/>
            <person name="Doggett N.A."/>
            <person name="Deaven L."/>
            <person name="Schmutz J."/>
            <person name="Grimwood J."/>
            <person name="Richardson P."/>
            <person name="Rokhsar D.S."/>
            <person name="Eichler E.E."/>
            <person name="Gilna P."/>
            <person name="Lucas S.M."/>
            <person name="Myers R.M."/>
            <person name="Rubin E.M."/>
            <person name="Pennacchio L.A."/>
        </authorList>
    </citation>
    <scope>NUCLEOTIDE SEQUENCE [LARGE SCALE GENOMIC DNA]</scope>
</reference>
<reference key="3">
    <citation type="journal article" date="2004" name="Genome Res.">
        <title>The status, quality, and expansion of the NIH full-length cDNA project: the Mammalian Gene Collection (MGC).</title>
        <authorList>
            <consortium name="The MGC Project Team"/>
        </authorList>
    </citation>
    <scope>NUCLEOTIDE SEQUENCE [LARGE SCALE MRNA] (ISOFORM 1)</scope>
    <scope>VARIANTS SER-186; LEU-433 AND HIS-521</scope>
    <source>
        <tissue>Testis</tissue>
    </source>
</reference>
<reference key="4">
    <citation type="journal article" date="2001" name="Genome Res.">
        <title>Towards a catalog of human genes and proteins: sequencing and analysis of 500 novel complete protein coding human cDNAs.</title>
        <authorList>
            <person name="Wiemann S."/>
            <person name="Weil B."/>
            <person name="Wellenreuther R."/>
            <person name="Gassenhuber J."/>
            <person name="Glassl S."/>
            <person name="Ansorge W."/>
            <person name="Boecher M."/>
            <person name="Bloecker H."/>
            <person name="Bauersachs S."/>
            <person name="Blum H."/>
            <person name="Lauber J."/>
            <person name="Duesterhoeft A."/>
            <person name="Beyer A."/>
            <person name="Koehrer K."/>
            <person name="Strack N."/>
            <person name="Mewes H.-W."/>
            <person name="Ottenwaelder B."/>
            <person name="Obermaier B."/>
            <person name="Tampe J."/>
            <person name="Heubner D."/>
            <person name="Wambutt R."/>
            <person name="Korn B."/>
            <person name="Klein M."/>
            <person name="Poustka A."/>
        </authorList>
    </citation>
    <scope>NUCLEOTIDE SEQUENCE [LARGE SCALE MRNA] OF 573-874</scope>
    <scope>VARIANT ARG-766</scope>
    <source>
        <tissue>Testis</tissue>
    </source>
</reference>
<gene>
    <name type="primary">DRC7</name>
    <name type="synonym">C16orf50</name>
    <name type="synonym">CCDC135</name>
</gene>
<dbReference type="EMBL" id="AK093035">
    <property type="protein sequence ID" value="BAC04026.1"/>
    <property type="molecule type" value="mRNA"/>
</dbReference>
<dbReference type="EMBL" id="AK292558">
    <property type="protein sequence ID" value="BAF85247.1"/>
    <property type="molecule type" value="mRNA"/>
</dbReference>
<dbReference type="EMBL" id="AC018552">
    <property type="status" value="NOT_ANNOTATED_CDS"/>
    <property type="molecule type" value="Genomic_DNA"/>
</dbReference>
<dbReference type="EMBL" id="BC036667">
    <property type="protein sequence ID" value="AAH36667.1"/>
    <property type="molecule type" value="mRNA"/>
</dbReference>
<dbReference type="EMBL" id="AL136907">
    <property type="protein sequence ID" value="CAB66841.2"/>
    <property type="molecule type" value="mRNA"/>
</dbReference>
<dbReference type="CCDS" id="CCDS10787.1">
    <molecule id="Q8IY82-1"/>
</dbReference>
<dbReference type="CCDS" id="CCDS73894.1">
    <molecule id="Q8IY82-2"/>
</dbReference>
<dbReference type="RefSeq" id="NP_001276091.1">
    <molecule id="Q8IY82-1"/>
    <property type="nucleotide sequence ID" value="NM_001289162.2"/>
</dbReference>
<dbReference type="RefSeq" id="NP_001276092.1">
    <molecule id="Q8IY82-2"/>
    <property type="nucleotide sequence ID" value="NM_001289163.2"/>
</dbReference>
<dbReference type="RefSeq" id="NP_115645.4">
    <molecule id="Q8IY82-1"/>
    <property type="nucleotide sequence ID" value="NM_032269.5"/>
</dbReference>
<dbReference type="RefSeq" id="XP_011521680.1">
    <property type="nucleotide sequence ID" value="XM_011523378.1"/>
</dbReference>
<dbReference type="RefSeq" id="XP_047290724.1">
    <molecule id="Q8IY82-1"/>
    <property type="nucleotide sequence ID" value="XM_047434768.1"/>
</dbReference>
<dbReference type="RefSeq" id="XP_047290727.1">
    <molecule id="Q8IY82-2"/>
    <property type="nucleotide sequence ID" value="XM_047434771.1"/>
</dbReference>
<dbReference type="RefSeq" id="XP_054170127.1">
    <molecule id="Q8IY82-1"/>
    <property type="nucleotide sequence ID" value="XM_054314152.1"/>
</dbReference>
<dbReference type="RefSeq" id="XP_054170130.1">
    <molecule id="Q8IY82-2"/>
    <property type="nucleotide sequence ID" value="XM_054314155.1"/>
</dbReference>
<dbReference type="PDB" id="8J07">
    <property type="method" value="EM"/>
    <property type="resolution" value="4.10 A"/>
    <property type="chains" value="7=1-874"/>
</dbReference>
<dbReference type="PDBsum" id="8J07"/>
<dbReference type="EMDB" id="EMD-35888"/>
<dbReference type="SMR" id="Q8IY82"/>
<dbReference type="BioGRID" id="123962">
    <property type="interactions" value="6"/>
</dbReference>
<dbReference type="ComplexPortal" id="CPX-8086">
    <property type="entry name" value="Nexin-dynein regulatory complex"/>
</dbReference>
<dbReference type="FunCoup" id="Q8IY82">
    <property type="interactions" value="75"/>
</dbReference>
<dbReference type="IntAct" id="Q8IY82">
    <property type="interactions" value="6"/>
</dbReference>
<dbReference type="STRING" id="9606.ENSP00000353942"/>
<dbReference type="GlyGen" id="Q8IY82">
    <property type="glycosylation" value="1 site, 1 O-linked glycan (1 site)"/>
</dbReference>
<dbReference type="iPTMnet" id="Q8IY82"/>
<dbReference type="PhosphoSitePlus" id="Q8IY82"/>
<dbReference type="BioMuta" id="DRC7"/>
<dbReference type="DMDM" id="317373462"/>
<dbReference type="jPOST" id="Q8IY82"/>
<dbReference type="MassIVE" id="Q8IY82"/>
<dbReference type="PaxDb" id="9606-ENSP00000353942"/>
<dbReference type="PeptideAtlas" id="Q8IY82"/>
<dbReference type="ProteomicsDB" id="71122">
    <molecule id="Q8IY82-1"/>
</dbReference>
<dbReference type="ProteomicsDB" id="71123">
    <molecule id="Q8IY82-2"/>
</dbReference>
<dbReference type="Antibodypedia" id="49050">
    <property type="antibodies" value="74 antibodies from 12 providers"/>
</dbReference>
<dbReference type="DNASU" id="84229"/>
<dbReference type="Ensembl" id="ENST00000336825.12">
    <molecule id="Q8IY82-2"/>
    <property type="protein sequence ID" value="ENSP00000338938.8"/>
    <property type="gene ID" value="ENSG00000159625.15"/>
</dbReference>
<dbReference type="Ensembl" id="ENST00000360716.8">
    <molecule id="Q8IY82-1"/>
    <property type="protein sequence ID" value="ENSP00000353942.3"/>
    <property type="gene ID" value="ENSG00000159625.15"/>
</dbReference>
<dbReference type="Ensembl" id="ENST00000394337.8">
    <molecule id="Q8IY82-1"/>
    <property type="protein sequence ID" value="ENSP00000377869.4"/>
    <property type="gene ID" value="ENSG00000159625.15"/>
</dbReference>
<dbReference type="GeneID" id="84229"/>
<dbReference type="KEGG" id="hsa:84229"/>
<dbReference type="MANE-Select" id="ENST00000360716.8">
    <property type="protein sequence ID" value="ENSP00000353942.3"/>
    <property type="RefSeq nucleotide sequence ID" value="NM_001289162.2"/>
    <property type="RefSeq protein sequence ID" value="NP_001276091.1"/>
</dbReference>
<dbReference type="UCSC" id="uc002emi.4">
    <molecule id="Q8IY82-1"/>
    <property type="organism name" value="human"/>
</dbReference>
<dbReference type="AGR" id="HGNC:25289"/>
<dbReference type="CTD" id="84229"/>
<dbReference type="GeneCards" id="DRC7"/>
<dbReference type="HGNC" id="HGNC:25289">
    <property type="gene designation" value="DRC7"/>
</dbReference>
<dbReference type="HPA" id="ENSG00000159625">
    <property type="expression patterns" value="Group enriched (choroid plexus, fallopian tube, testis)"/>
</dbReference>
<dbReference type="MIM" id="618769">
    <property type="type" value="gene"/>
</dbReference>
<dbReference type="neXtProt" id="NX_Q8IY82"/>
<dbReference type="OpenTargets" id="ENSG00000159625"/>
<dbReference type="PharmGKB" id="PA162381380"/>
<dbReference type="VEuPathDB" id="HostDB:ENSG00000159625"/>
<dbReference type="eggNOG" id="ENOG502QRNZ">
    <property type="taxonomic scope" value="Eukaryota"/>
</dbReference>
<dbReference type="GeneTree" id="ENSGT00390000004913"/>
<dbReference type="HOGENOM" id="CLU_016052_0_0_1"/>
<dbReference type="InParanoid" id="Q8IY82"/>
<dbReference type="OMA" id="CRDDYIT"/>
<dbReference type="OrthoDB" id="10262874at2759"/>
<dbReference type="PAN-GO" id="Q8IY82">
    <property type="GO annotations" value="2 GO annotations based on evolutionary models"/>
</dbReference>
<dbReference type="PhylomeDB" id="Q8IY82"/>
<dbReference type="TreeFam" id="TF323665"/>
<dbReference type="PathwayCommons" id="Q8IY82"/>
<dbReference type="SignaLink" id="Q8IY82"/>
<dbReference type="BioGRID-ORCS" id="84229">
    <property type="hits" value="10 hits in 1142 CRISPR screens"/>
</dbReference>
<dbReference type="ChiTaRS" id="DRC7">
    <property type="organism name" value="human"/>
</dbReference>
<dbReference type="GeneWiki" id="Coiled-coil_domain-containing_protein_135"/>
<dbReference type="GenomeRNAi" id="84229"/>
<dbReference type="Pharos" id="Q8IY82">
    <property type="development level" value="Tdark"/>
</dbReference>
<dbReference type="PRO" id="PR:Q8IY82"/>
<dbReference type="Proteomes" id="UP000005640">
    <property type="component" value="Chromosome 16"/>
</dbReference>
<dbReference type="RNAct" id="Q8IY82">
    <property type="molecule type" value="protein"/>
</dbReference>
<dbReference type="Bgee" id="ENSG00000159625">
    <property type="expression patterns" value="Expressed in right uterine tube and 117 other cell types or tissues"/>
</dbReference>
<dbReference type="ExpressionAtlas" id="Q8IY82">
    <property type="expression patterns" value="baseline and differential"/>
</dbReference>
<dbReference type="GO" id="GO:0005737">
    <property type="term" value="C:cytoplasm"/>
    <property type="evidence" value="ECO:0000314"/>
    <property type="project" value="LIFEdb"/>
</dbReference>
<dbReference type="GO" id="GO:0005856">
    <property type="term" value="C:cytoskeleton"/>
    <property type="evidence" value="ECO:0007669"/>
    <property type="project" value="UniProtKB-KW"/>
</dbReference>
<dbReference type="GO" id="GO:0031514">
    <property type="term" value="C:motile cilium"/>
    <property type="evidence" value="ECO:0000318"/>
    <property type="project" value="GO_Central"/>
</dbReference>
<dbReference type="GO" id="GO:0030317">
    <property type="term" value="P:flagellated sperm motility"/>
    <property type="evidence" value="ECO:0000250"/>
    <property type="project" value="UniProtKB"/>
</dbReference>
<dbReference type="GO" id="GO:0007288">
    <property type="term" value="P:sperm axoneme assembly"/>
    <property type="evidence" value="ECO:0000250"/>
    <property type="project" value="UniProtKB"/>
</dbReference>
<dbReference type="GO" id="GO:0007283">
    <property type="term" value="P:spermatogenesis"/>
    <property type="evidence" value="ECO:0000250"/>
    <property type="project" value="UniProtKB"/>
</dbReference>
<dbReference type="InterPro" id="IPR056290">
    <property type="entry name" value="CEPT76/DRC7_peptidase-like_dom"/>
</dbReference>
<dbReference type="InterPro" id="IPR033551">
    <property type="entry name" value="DRC7/lobo"/>
</dbReference>
<dbReference type="InterPro" id="IPR056292">
    <property type="entry name" value="DRC7_C"/>
</dbReference>
<dbReference type="InterPro" id="IPR056291">
    <property type="entry name" value="MORN_DRC7"/>
</dbReference>
<dbReference type="InterPro" id="IPR038765">
    <property type="entry name" value="Papain-like_cys_pep_sf"/>
</dbReference>
<dbReference type="PANTHER" id="PTHR35249">
    <property type="entry name" value="DYNEIN REGULATORY COMPLEX SUBUNIT 7"/>
    <property type="match status" value="1"/>
</dbReference>
<dbReference type="PANTHER" id="PTHR35249:SF2">
    <property type="entry name" value="DYNEIN REGULATORY COMPLEX SUBUNIT 7"/>
    <property type="match status" value="1"/>
</dbReference>
<dbReference type="Pfam" id="PF24656">
    <property type="entry name" value="CEPT76_peptidase"/>
    <property type="match status" value="1"/>
</dbReference>
<dbReference type="Pfam" id="PF24671">
    <property type="entry name" value="DRC7_C"/>
    <property type="match status" value="1"/>
</dbReference>
<dbReference type="Pfam" id="PF24667">
    <property type="entry name" value="MORN_DRC7"/>
    <property type="match status" value="1"/>
</dbReference>
<dbReference type="SUPFAM" id="SSF54001">
    <property type="entry name" value="Cysteine proteinases"/>
    <property type="match status" value="1"/>
</dbReference>
<sequence>MEVLREKVEEEEEAEREEAAEWAEWARMEKMMRPVEVRKEEITLKQETLRDLEKKLSEIQITVSAELPAFTKDTIDISKLPISYKTNTPKEEHLLQVADNFSRQYSHLCPDRVPLFLHPLNECEVPKFVSTTLRPTLMPYPELYNWDSCAQFVSDFLTMVPLPDPLKPPSHLYSSTTVLKYQKGNCFDFSTLLCSMLIGSGYDAYCVNGYGSLDLCHMDLTREVCPLTVKPKETIKKEEKVLPKKYTIKPPRDLCSRFEQEQEVKKQQEIRAQEKKRLREEEERLMEAEKAKPDALHGLRVHSWVLVLSGKREVPENFFIDPFTGHSYSTQDEHFLGIESLWNHKNYWINMQDCWNCCKDLIFDLGDPVRWEYMLLGTDKSQLSLTEEDDSGINDEDDVENLGKEDEDKSFDMPHSWVEQIEISPEAFETRCPNGKKVIQYKRAKLEKWAPYLNSNGLVSRLTTYEDLQCTNILEIKEWYQNREDMLELKHINKTTDLKTDYFKPGHPQALRVHSYKSMQPEMDRVIEFYETARVDGLMKREETPRTMTEYYQGRPDFLSYRHASFGPRVKKLTLSSAESNPRPIVKITERFFRNPAKPAEEDVAERVFLVAEERIQLRYHCREDHITASKREFLRRTEVDSKGNKIIMTPDMCISFEVEPMEHTKKLLYQYEAMMHLKREEKLSRHQVWESELEVLEILKLREEEEAAHTLTISIYDTKRNEKSKEYREAMERMMHEEHLRQVETQLDYLAPFLAQLPPGEKLTCWQAVRLKDECLSDFKQRLINKANLIQARFEKETQELQKKQQWYQENQVTLTPEDEDLYLSYCSQAMFRIRILEQRLNRHKELAPLKYLALEEKLYKDPRLGELQKIFA</sequence>
<comment type="function">
    <text evidence="1 2">Component of the nexin-dynein regulatory complex (N-DRC) a key regulator of ciliary/flagellar motility which maintains the alignment and integrity of the distal axoneme and regulates microtubule sliding in motile axonemes (By similarity). Involved in the regulation of flagellar motility (By similarity). Essential for male fertility, sperm head morphogenesis and sperm flagellum formation (By similarity).</text>
</comment>
<comment type="subunit">
    <text evidence="1 2">Component of the nexin-dynein regulatory complex (N-DRC). Interacts with TCTE1/DRC5 (By similarity). Interacts with DRC3 and GAS8/DRC4 (By similarity).</text>
</comment>
<comment type="interaction">
    <interactant intactId="EBI-10262896">
        <id>Q8IY82</id>
    </interactant>
    <interactant intactId="EBI-1049597">
        <id>P27797</id>
        <label>CALR</label>
    </interactant>
    <organismsDiffer>false</organismsDiffer>
    <experiments>3</experiments>
</comment>
<comment type="interaction">
    <interactant intactId="EBI-10262896">
        <id>Q8IY82</id>
    </interactant>
    <interactant intactId="EBI-351007">
        <id>P36957</id>
        <label>DLST</label>
    </interactant>
    <organismsDiffer>false</organismsDiffer>
    <experiments>3</experiments>
</comment>
<comment type="interaction">
    <interactant intactId="EBI-10262896">
        <id>Q8IY82</id>
    </interactant>
    <interactant intactId="EBI-2349927">
        <id>Q5JST6</id>
        <label>EFHC2</label>
    </interactant>
    <organismsDiffer>false</organismsDiffer>
    <experiments>3</experiments>
</comment>
<comment type="interaction">
    <interactant intactId="EBI-10262896">
        <id>Q8IY82</id>
    </interactant>
    <interactant intactId="EBI-10182361">
        <id>Q9NS73-5</id>
        <label>MBIP</label>
    </interactant>
    <organismsDiffer>false</organismsDiffer>
    <experiments>3</experiments>
</comment>
<comment type="interaction">
    <interactant intactId="EBI-10262896">
        <id>Q8IY82</id>
    </interactant>
    <interactant intactId="EBI-1055945">
        <id>Q8TDX7</id>
        <label>NEK7</label>
    </interactant>
    <organismsDiffer>false</organismsDiffer>
    <experiments>3</experiments>
</comment>
<comment type="subcellular location">
    <subcellularLocation>
        <location evidence="1">Cell projection</location>
        <location evidence="1">Cilium</location>
        <location evidence="1">Flagellum</location>
    </subcellularLocation>
    <subcellularLocation>
        <location evidence="1">Cytoplasm</location>
        <location evidence="1">Cytoskeleton</location>
        <location evidence="1">Cilium axoneme</location>
    </subcellularLocation>
    <subcellularLocation>
        <location evidence="1">Cytoplasm</location>
        <location evidence="1">Cytoskeleton</location>
        <location evidence="1">Flagellum axoneme</location>
    </subcellularLocation>
    <text evidence="1">Associated with the outer doublet microtubules (OD).</text>
</comment>
<comment type="alternative products">
    <event type="alternative splicing"/>
    <isoform>
        <id>Q8IY82-1</id>
        <name>1</name>
        <sequence type="displayed"/>
    </isoform>
    <isoform>
        <id>Q8IY82-2</id>
        <name>2</name>
        <sequence type="described" ref="VSP_023438"/>
    </isoform>
</comment>
<comment type="similarity">
    <text evidence="8">Belongs to the DRC7 family.</text>
</comment>
<feature type="chain" id="PRO_0000279434" description="Dynein regulatory complex subunit 7">
    <location>
        <begin position="1"/>
        <end position="874"/>
    </location>
</feature>
<feature type="region of interest" description="Disordered" evidence="4">
    <location>
        <begin position="386"/>
        <end position="410"/>
    </location>
</feature>
<feature type="coiled-coil region" evidence="3">
    <location>
        <begin position="1"/>
        <end position="67"/>
    </location>
</feature>
<feature type="coiled-coil region" evidence="3">
    <location>
        <begin position="257"/>
        <end position="297"/>
    </location>
</feature>
<feature type="coiled-coil region" evidence="3">
    <location>
        <begin position="688"/>
        <end position="711"/>
    </location>
</feature>
<feature type="coiled-coil region" evidence="3">
    <location>
        <begin position="781"/>
        <end position="807"/>
    </location>
</feature>
<feature type="compositionally biased region" description="Acidic residues" evidence="4">
    <location>
        <begin position="386"/>
        <end position="400"/>
    </location>
</feature>
<feature type="compositionally biased region" description="Basic and acidic residues" evidence="4">
    <location>
        <begin position="401"/>
        <end position="410"/>
    </location>
</feature>
<feature type="splice variant" id="VSP_023438" description="In isoform 2." evidence="7">
    <location>
        <begin position="169"/>
        <end position="233"/>
    </location>
</feature>
<feature type="sequence variant" id="VAR_061580" description="In dbSNP:rs55645458.">
    <original>D</original>
    <variation>N</variation>
    <location>
        <position position="51"/>
    </location>
</feature>
<feature type="sequence variant" id="VAR_050738" description="In dbSNP:rs11649000.">
    <original>L</original>
    <variation>M</variation>
    <location>
        <position position="120"/>
    </location>
</feature>
<feature type="sequence variant" id="VAR_030898" description="In dbSNP:rs7196016." evidence="6">
    <original>C</original>
    <variation>S</variation>
    <location>
        <position position="186"/>
    </location>
</feature>
<feature type="sequence variant" id="VAR_061581" description="In dbSNP:rs58373934.">
    <original>V</original>
    <variation>E</variation>
    <location>
        <position position="241"/>
    </location>
</feature>
<feature type="sequence variant" id="VAR_030899" description="In dbSNP:rs3809611." evidence="6">
    <original>P</original>
    <variation>L</variation>
    <location>
        <position position="433"/>
    </location>
</feature>
<feature type="sequence variant" id="VAR_055286" description="In dbSNP:rs17853687." evidence="6">
    <original>P</original>
    <variation>H</variation>
    <location>
        <position position="521"/>
    </location>
</feature>
<feature type="sequence variant" id="VAR_030900" description="In dbSNP:rs2923144.">
    <original>N</original>
    <variation>K</variation>
    <location>
        <position position="581"/>
    </location>
</feature>
<feature type="sequence variant" id="VAR_030901" description="In dbSNP:rs2923147." evidence="5">
    <original>C</original>
    <variation>R</variation>
    <location>
        <position position="766"/>
    </location>
</feature>
<feature type="sequence conflict" description="In Ref. 1; BAC04026." evidence="8" ref="1">
    <original>Q</original>
    <variation>R</variation>
    <location>
        <position position="440"/>
    </location>
</feature>
<keyword id="KW-0002">3D-structure</keyword>
<keyword id="KW-0025">Alternative splicing</keyword>
<keyword id="KW-0966">Cell projection</keyword>
<keyword id="KW-0969">Cilium</keyword>
<keyword id="KW-0175">Coiled coil</keyword>
<keyword id="KW-0963">Cytoplasm</keyword>
<keyword id="KW-0206">Cytoskeleton</keyword>
<keyword id="KW-0221">Differentiation</keyword>
<keyword id="KW-0282">Flagellum</keyword>
<keyword id="KW-1267">Proteomics identification</keyword>
<keyword id="KW-1185">Reference proteome</keyword>
<keyword id="KW-0744">Spermatogenesis</keyword>
<evidence type="ECO:0000250" key="1">
    <source>
        <dbReference type="UniProtKB" id="A8JAM0"/>
    </source>
</evidence>
<evidence type="ECO:0000250" key="2">
    <source>
        <dbReference type="UniProtKB" id="Q6V3W6"/>
    </source>
</evidence>
<evidence type="ECO:0000255" key="3"/>
<evidence type="ECO:0000256" key="4">
    <source>
        <dbReference type="SAM" id="MobiDB-lite"/>
    </source>
</evidence>
<evidence type="ECO:0000269" key="5">
    <source>
    </source>
</evidence>
<evidence type="ECO:0000269" key="6">
    <source>
    </source>
</evidence>
<evidence type="ECO:0000303" key="7">
    <source>
    </source>
</evidence>
<evidence type="ECO:0000305" key="8"/>
<name>DRC7_HUMAN</name>
<protein>
    <recommendedName>
        <fullName>Dynein regulatory complex subunit 7</fullName>
    </recommendedName>
    <alternativeName>
        <fullName>Coiled-coil domain-containing protein 135</fullName>
    </alternativeName>
    <alternativeName>
        <fullName>Coiled-coil domain-containing protein lobo homolog</fullName>
    </alternativeName>
</protein>
<organism>
    <name type="scientific">Homo sapiens</name>
    <name type="common">Human</name>
    <dbReference type="NCBI Taxonomy" id="9606"/>
    <lineage>
        <taxon>Eukaryota</taxon>
        <taxon>Metazoa</taxon>
        <taxon>Chordata</taxon>
        <taxon>Craniata</taxon>
        <taxon>Vertebrata</taxon>
        <taxon>Euteleostomi</taxon>
        <taxon>Mammalia</taxon>
        <taxon>Eutheria</taxon>
        <taxon>Euarchontoglires</taxon>
        <taxon>Primates</taxon>
        <taxon>Haplorrhini</taxon>
        <taxon>Catarrhini</taxon>
        <taxon>Hominidae</taxon>
        <taxon>Homo</taxon>
    </lineage>
</organism>
<proteinExistence type="evidence at protein level"/>
<accession>Q8IY82</accession>
<accession>A8K943</accession>
<accession>Q8NAA0</accession>
<accession>Q9H080</accession>